<proteinExistence type="inferred from homology"/>
<reference key="1">
    <citation type="journal article" date="2005" name="Proc. Natl. Acad. Sci. U.S.A.">
        <title>The psychrophilic lifestyle as revealed by the genome sequence of Colwellia psychrerythraea 34H through genomic and proteomic analyses.</title>
        <authorList>
            <person name="Methe B.A."/>
            <person name="Nelson K.E."/>
            <person name="Deming J.W."/>
            <person name="Momen B."/>
            <person name="Melamud E."/>
            <person name="Zhang X."/>
            <person name="Moult J."/>
            <person name="Madupu R."/>
            <person name="Nelson W.C."/>
            <person name="Dodson R.J."/>
            <person name="Brinkac L.M."/>
            <person name="Daugherty S.C."/>
            <person name="Durkin A.S."/>
            <person name="DeBoy R.T."/>
            <person name="Kolonay J.F."/>
            <person name="Sullivan S.A."/>
            <person name="Zhou L."/>
            <person name="Davidsen T.M."/>
            <person name="Wu M."/>
            <person name="Huston A.L."/>
            <person name="Lewis M."/>
            <person name="Weaver B."/>
            <person name="Weidman J.F."/>
            <person name="Khouri H."/>
            <person name="Utterback T.R."/>
            <person name="Feldblyum T.V."/>
            <person name="Fraser C.M."/>
        </authorList>
    </citation>
    <scope>NUCLEOTIDE SEQUENCE [LARGE SCALE GENOMIC DNA]</scope>
    <source>
        <strain>34H / ATCC BAA-681</strain>
    </source>
</reference>
<name>TRMD_COLP3</name>
<sequence>MWIGVISLFPEMFNAITEYGVTGRAIRNGLIDFHLWNPRDFTHDKHRTVDDRPYGGGPGMLMMVQPLRDAIAAARKAAEVNGGKAKVIYLSPQGRKLDQQGVSELAQHDRLVFIAGRYEGIDERLIASDIDEEWSVGDYILSGGELPAMNVIDAVARLVPGVLGHKESAEQDSFSNGLLDCPHYTRPEVLTTPQGDEMSVPKVLLSGNHEHIRLWRQEQSLLRTWTRRPELLNNLALTAEQEKALTLIKKQVK</sequence>
<organism>
    <name type="scientific">Colwellia psychrerythraea (strain 34H / ATCC BAA-681)</name>
    <name type="common">Vibrio psychroerythus</name>
    <dbReference type="NCBI Taxonomy" id="167879"/>
    <lineage>
        <taxon>Bacteria</taxon>
        <taxon>Pseudomonadati</taxon>
        <taxon>Pseudomonadota</taxon>
        <taxon>Gammaproteobacteria</taxon>
        <taxon>Alteromonadales</taxon>
        <taxon>Colwelliaceae</taxon>
        <taxon>Colwellia</taxon>
    </lineage>
</organism>
<feature type="chain" id="PRO_0000257408" description="tRNA (guanine-N(1)-)-methyltransferase">
    <location>
        <begin position="1"/>
        <end position="253"/>
    </location>
</feature>
<feature type="binding site" evidence="1">
    <location>
        <position position="116"/>
    </location>
    <ligand>
        <name>S-adenosyl-L-methionine</name>
        <dbReference type="ChEBI" id="CHEBI:59789"/>
    </ligand>
</feature>
<feature type="binding site" evidence="1">
    <location>
        <begin position="136"/>
        <end position="141"/>
    </location>
    <ligand>
        <name>S-adenosyl-L-methionine</name>
        <dbReference type="ChEBI" id="CHEBI:59789"/>
    </ligand>
</feature>
<accession>Q47WV0</accession>
<gene>
    <name evidence="1" type="primary">trmD</name>
    <name type="ordered locus">CPS_4067</name>
</gene>
<protein>
    <recommendedName>
        <fullName evidence="1">tRNA (guanine-N(1)-)-methyltransferase</fullName>
        <ecNumber evidence="1">2.1.1.228</ecNumber>
    </recommendedName>
    <alternativeName>
        <fullName evidence="1">M1G-methyltransferase</fullName>
    </alternativeName>
    <alternativeName>
        <fullName evidence="1">tRNA [GM37] methyltransferase</fullName>
    </alternativeName>
</protein>
<keyword id="KW-0963">Cytoplasm</keyword>
<keyword id="KW-0489">Methyltransferase</keyword>
<keyword id="KW-0949">S-adenosyl-L-methionine</keyword>
<keyword id="KW-0808">Transferase</keyword>
<keyword id="KW-0819">tRNA processing</keyword>
<dbReference type="EC" id="2.1.1.228" evidence="1"/>
<dbReference type="EMBL" id="CP000083">
    <property type="protein sequence ID" value="AAZ27276.1"/>
    <property type="molecule type" value="Genomic_DNA"/>
</dbReference>
<dbReference type="RefSeq" id="WP_011044803.1">
    <property type="nucleotide sequence ID" value="NC_003910.7"/>
</dbReference>
<dbReference type="SMR" id="Q47WV0"/>
<dbReference type="STRING" id="167879.CPS_4067"/>
<dbReference type="KEGG" id="cps:CPS_4067"/>
<dbReference type="eggNOG" id="COG0336">
    <property type="taxonomic scope" value="Bacteria"/>
</dbReference>
<dbReference type="HOGENOM" id="CLU_047363_0_1_6"/>
<dbReference type="Proteomes" id="UP000000547">
    <property type="component" value="Chromosome"/>
</dbReference>
<dbReference type="GO" id="GO:0005829">
    <property type="term" value="C:cytosol"/>
    <property type="evidence" value="ECO:0007669"/>
    <property type="project" value="TreeGrafter"/>
</dbReference>
<dbReference type="GO" id="GO:0052906">
    <property type="term" value="F:tRNA (guanine(37)-N1)-methyltransferase activity"/>
    <property type="evidence" value="ECO:0007669"/>
    <property type="project" value="UniProtKB-UniRule"/>
</dbReference>
<dbReference type="GO" id="GO:0002939">
    <property type="term" value="P:tRNA N1-guanine methylation"/>
    <property type="evidence" value="ECO:0007669"/>
    <property type="project" value="TreeGrafter"/>
</dbReference>
<dbReference type="CDD" id="cd18080">
    <property type="entry name" value="TrmD-like"/>
    <property type="match status" value="1"/>
</dbReference>
<dbReference type="FunFam" id="1.10.1270.20:FF:000001">
    <property type="entry name" value="tRNA (guanine-N(1)-)-methyltransferase"/>
    <property type="match status" value="1"/>
</dbReference>
<dbReference type="FunFam" id="3.40.1280.10:FF:000001">
    <property type="entry name" value="tRNA (guanine-N(1)-)-methyltransferase"/>
    <property type="match status" value="1"/>
</dbReference>
<dbReference type="Gene3D" id="3.40.1280.10">
    <property type="match status" value="1"/>
</dbReference>
<dbReference type="Gene3D" id="1.10.1270.20">
    <property type="entry name" value="tRNA(m1g37)methyltransferase, domain 2"/>
    <property type="match status" value="1"/>
</dbReference>
<dbReference type="HAMAP" id="MF_00605">
    <property type="entry name" value="TrmD"/>
    <property type="match status" value="1"/>
</dbReference>
<dbReference type="InterPro" id="IPR029028">
    <property type="entry name" value="Alpha/beta_knot_MTases"/>
</dbReference>
<dbReference type="InterPro" id="IPR023148">
    <property type="entry name" value="tRNA_m1G_MeTrfase_C_sf"/>
</dbReference>
<dbReference type="InterPro" id="IPR002649">
    <property type="entry name" value="tRNA_m1G_MeTrfase_TrmD"/>
</dbReference>
<dbReference type="InterPro" id="IPR029026">
    <property type="entry name" value="tRNA_m1G_MTases_N"/>
</dbReference>
<dbReference type="InterPro" id="IPR016009">
    <property type="entry name" value="tRNA_MeTrfase_TRMD/TRM10"/>
</dbReference>
<dbReference type="NCBIfam" id="NF000648">
    <property type="entry name" value="PRK00026.1"/>
    <property type="match status" value="1"/>
</dbReference>
<dbReference type="NCBIfam" id="TIGR00088">
    <property type="entry name" value="trmD"/>
    <property type="match status" value="1"/>
</dbReference>
<dbReference type="PANTHER" id="PTHR46417">
    <property type="entry name" value="TRNA (GUANINE-N(1)-)-METHYLTRANSFERASE"/>
    <property type="match status" value="1"/>
</dbReference>
<dbReference type="PANTHER" id="PTHR46417:SF1">
    <property type="entry name" value="TRNA (GUANINE-N(1)-)-METHYLTRANSFERASE"/>
    <property type="match status" value="1"/>
</dbReference>
<dbReference type="Pfam" id="PF01746">
    <property type="entry name" value="tRNA_m1G_MT"/>
    <property type="match status" value="1"/>
</dbReference>
<dbReference type="PIRSF" id="PIRSF000386">
    <property type="entry name" value="tRNA_mtase"/>
    <property type="match status" value="1"/>
</dbReference>
<dbReference type="SUPFAM" id="SSF75217">
    <property type="entry name" value="alpha/beta knot"/>
    <property type="match status" value="1"/>
</dbReference>
<evidence type="ECO:0000255" key="1">
    <source>
        <dbReference type="HAMAP-Rule" id="MF_00605"/>
    </source>
</evidence>
<comment type="function">
    <text evidence="1">Specifically methylates guanosine-37 in various tRNAs.</text>
</comment>
<comment type="catalytic activity">
    <reaction evidence="1">
        <text>guanosine(37) in tRNA + S-adenosyl-L-methionine = N(1)-methylguanosine(37) in tRNA + S-adenosyl-L-homocysteine + H(+)</text>
        <dbReference type="Rhea" id="RHEA:36899"/>
        <dbReference type="Rhea" id="RHEA-COMP:10145"/>
        <dbReference type="Rhea" id="RHEA-COMP:10147"/>
        <dbReference type="ChEBI" id="CHEBI:15378"/>
        <dbReference type="ChEBI" id="CHEBI:57856"/>
        <dbReference type="ChEBI" id="CHEBI:59789"/>
        <dbReference type="ChEBI" id="CHEBI:73542"/>
        <dbReference type="ChEBI" id="CHEBI:74269"/>
        <dbReference type="EC" id="2.1.1.228"/>
    </reaction>
</comment>
<comment type="subunit">
    <text evidence="1">Homodimer.</text>
</comment>
<comment type="subcellular location">
    <subcellularLocation>
        <location evidence="1">Cytoplasm</location>
    </subcellularLocation>
</comment>
<comment type="similarity">
    <text evidence="1">Belongs to the RNA methyltransferase TrmD family.</text>
</comment>